<sequence length="208" mass="23420">MLSIILKESVRNLGKAGVVTKVKPGYARYLLTQKKAVRATKENLKNLEEQYLVIERENLEKLEAAKALKLSLEDEFLIITRQAADDGKLFGSVTPKCISKLLSDKGYNIHYRNIFFYSVIKYIGEYVVNLELHPDLVLPITLYVVKNDLGAMQAQKLHAEKKRKIEKEVEEGSGTSVDESLKLDSVSDSIDTSGVNSSDKEEENNIIE</sequence>
<feature type="chain" id="PRO_0000258454" description="Large ribosomal subunit protein bL9">
    <location>
        <begin position="1"/>
        <end position="208"/>
    </location>
</feature>
<feature type="region of interest" description="Disordered" evidence="2">
    <location>
        <begin position="161"/>
        <end position="208"/>
    </location>
</feature>
<feature type="compositionally biased region" description="Polar residues" evidence="2">
    <location>
        <begin position="186"/>
        <end position="197"/>
    </location>
</feature>
<keyword id="KW-0687">Ribonucleoprotein</keyword>
<keyword id="KW-0689">Ribosomal protein</keyword>
<keyword id="KW-0694">RNA-binding</keyword>
<keyword id="KW-0699">rRNA-binding</keyword>
<proteinExistence type="inferred from homology"/>
<protein>
    <recommendedName>
        <fullName evidence="1">Large ribosomal subunit protein bL9</fullName>
    </recommendedName>
    <alternativeName>
        <fullName evidence="3">50S ribosomal protein L9</fullName>
    </alternativeName>
</protein>
<comment type="function">
    <text evidence="1">Binds to the 23S rRNA.</text>
</comment>
<comment type="similarity">
    <text evidence="1">Belongs to the bacterial ribosomal protein bL9 family.</text>
</comment>
<evidence type="ECO:0000255" key="1">
    <source>
        <dbReference type="HAMAP-Rule" id="MF_00503"/>
    </source>
</evidence>
<evidence type="ECO:0000256" key="2">
    <source>
        <dbReference type="SAM" id="MobiDB-lite"/>
    </source>
</evidence>
<evidence type="ECO:0000305" key="3"/>
<name>RL9_EHRCJ</name>
<gene>
    <name evidence="1" type="primary">rplI</name>
    <name type="ordered locus">Ecaj_0693</name>
</gene>
<organism>
    <name type="scientific">Ehrlichia canis (strain Jake)</name>
    <dbReference type="NCBI Taxonomy" id="269484"/>
    <lineage>
        <taxon>Bacteria</taxon>
        <taxon>Pseudomonadati</taxon>
        <taxon>Pseudomonadota</taxon>
        <taxon>Alphaproteobacteria</taxon>
        <taxon>Rickettsiales</taxon>
        <taxon>Anaplasmataceae</taxon>
        <taxon>Ehrlichia</taxon>
    </lineage>
</organism>
<reference key="1">
    <citation type="journal article" date="2006" name="J. Bacteriol.">
        <title>The genome of the obligately intracellular bacterium Ehrlichia canis reveals themes of complex membrane structure and immune evasion strategies.</title>
        <authorList>
            <person name="Mavromatis K."/>
            <person name="Doyle C.K."/>
            <person name="Lykidis A."/>
            <person name="Ivanova N."/>
            <person name="Francino M.P."/>
            <person name="Chain P."/>
            <person name="Shin M."/>
            <person name="Malfatti S."/>
            <person name="Larimer F."/>
            <person name="Copeland A."/>
            <person name="Detter J.C."/>
            <person name="Land M."/>
            <person name="Richardson P.M."/>
            <person name="Yu X.J."/>
            <person name="Walker D.H."/>
            <person name="McBride J.W."/>
            <person name="Kyrpides N.C."/>
        </authorList>
    </citation>
    <scope>NUCLEOTIDE SEQUENCE [LARGE SCALE GENOMIC DNA]</scope>
    <source>
        <strain>Jake</strain>
    </source>
</reference>
<dbReference type="EMBL" id="CP000107">
    <property type="protein sequence ID" value="AAZ68725.1"/>
    <property type="molecule type" value="Genomic_DNA"/>
</dbReference>
<dbReference type="RefSeq" id="WP_011304802.1">
    <property type="nucleotide sequence ID" value="NC_007354.1"/>
</dbReference>
<dbReference type="SMR" id="Q3YRD0"/>
<dbReference type="FunCoup" id="Q3YRD0">
    <property type="interactions" value="368"/>
</dbReference>
<dbReference type="STRING" id="269484.Ecaj_0693"/>
<dbReference type="KEGG" id="ecn:Ecaj_0693"/>
<dbReference type="eggNOG" id="COG0359">
    <property type="taxonomic scope" value="Bacteria"/>
</dbReference>
<dbReference type="HOGENOM" id="CLU_078938_1_1_5"/>
<dbReference type="InParanoid" id="Q3YRD0"/>
<dbReference type="Proteomes" id="UP000000435">
    <property type="component" value="Chromosome"/>
</dbReference>
<dbReference type="GO" id="GO:1990904">
    <property type="term" value="C:ribonucleoprotein complex"/>
    <property type="evidence" value="ECO:0007669"/>
    <property type="project" value="UniProtKB-KW"/>
</dbReference>
<dbReference type="GO" id="GO:0005840">
    <property type="term" value="C:ribosome"/>
    <property type="evidence" value="ECO:0007669"/>
    <property type="project" value="UniProtKB-KW"/>
</dbReference>
<dbReference type="GO" id="GO:0019843">
    <property type="term" value="F:rRNA binding"/>
    <property type="evidence" value="ECO:0007669"/>
    <property type="project" value="UniProtKB-UniRule"/>
</dbReference>
<dbReference type="GO" id="GO:0003735">
    <property type="term" value="F:structural constituent of ribosome"/>
    <property type="evidence" value="ECO:0007669"/>
    <property type="project" value="InterPro"/>
</dbReference>
<dbReference type="GO" id="GO:0006412">
    <property type="term" value="P:translation"/>
    <property type="evidence" value="ECO:0007669"/>
    <property type="project" value="UniProtKB-UniRule"/>
</dbReference>
<dbReference type="Gene3D" id="3.10.430.100">
    <property type="entry name" value="Ribosomal protein L9, C-terminal domain"/>
    <property type="match status" value="1"/>
</dbReference>
<dbReference type="Gene3D" id="3.40.5.10">
    <property type="entry name" value="Ribosomal protein L9, N-terminal domain"/>
    <property type="match status" value="1"/>
</dbReference>
<dbReference type="HAMAP" id="MF_00503">
    <property type="entry name" value="Ribosomal_bL9"/>
    <property type="match status" value="1"/>
</dbReference>
<dbReference type="InterPro" id="IPR000244">
    <property type="entry name" value="Ribosomal_bL9"/>
</dbReference>
<dbReference type="InterPro" id="IPR009027">
    <property type="entry name" value="Ribosomal_bL9/RNase_H1_N"/>
</dbReference>
<dbReference type="InterPro" id="IPR020594">
    <property type="entry name" value="Ribosomal_bL9_bac/chp"/>
</dbReference>
<dbReference type="InterPro" id="IPR020069">
    <property type="entry name" value="Ribosomal_bL9_C"/>
</dbReference>
<dbReference type="InterPro" id="IPR036791">
    <property type="entry name" value="Ribosomal_bL9_C_sf"/>
</dbReference>
<dbReference type="InterPro" id="IPR020070">
    <property type="entry name" value="Ribosomal_bL9_N"/>
</dbReference>
<dbReference type="InterPro" id="IPR036935">
    <property type="entry name" value="Ribosomal_bL9_N_sf"/>
</dbReference>
<dbReference type="NCBIfam" id="TIGR00158">
    <property type="entry name" value="L9"/>
    <property type="match status" value="1"/>
</dbReference>
<dbReference type="PANTHER" id="PTHR21368">
    <property type="entry name" value="50S RIBOSOMAL PROTEIN L9"/>
    <property type="match status" value="1"/>
</dbReference>
<dbReference type="Pfam" id="PF03948">
    <property type="entry name" value="Ribosomal_L9_C"/>
    <property type="match status" value="1"/>
</dbReference>
<dbReference type="Pfam" id="PF01281">
    <property type="entry name" value="Ribosomal_L9_N"/>
    <property type="match status" value="1"/>
</dbReference>
<dbReference type="SUPFAM" id="SSF55658">
    <property type="entry name" value="L9 N-domain-like"/>
    <property type="match status" value="1"/>
</dbReference>
<dbReference type="SUPFAM" id="SSF55653">
    <property type="entry name" value="Ribosomal protein L9 C-domain"/>
    <property type="match status" value="1"/>
</dbReference>
<accession>Q3YRD0</accession>